<comment type="subunit">
    <text evidence="1">Part of the 50S ribosomal subunit.</text>
</comment>
<comment type="similarity">
    <text evidence="1">Belongs to the bacterial ribosomal protein bL31 family. Type B subfamily.</text>
</comment>
<dbReference type="EMBL" id="CP001011">
    <property type="protein sequence ID" value="ACB92225.1"/>
    <property type="molecule type" value="Genomic_DNA"/>
</dbReference>
<dbReference type="RefSeq" id="WP_004087863.1">
    <property type="nucleotide sequence ID" value="NC_010577.1"/>
</dbReference>
<dbReference type="SMR" id="B2IAE5"/>
<dbReference type="KEGG" id="xfn:XfasM23_0786"/>
<dbReference type="HOGENOM" id="CLU_114306_2_2_6"/>
<dbReference type="Proteomes" id="UP000001698">
    <property type="component" value="Chromosome"/>
</dbReference>
<dbReference type="GO" id="GO:1990904">
    <property type="term" value="C:ribonucleoprotein complex"/>
    <property type="evidence" value="ECO:0007669"/>
    <property type="project" value="UniProtKB-KW"/>
</dbReference>
<dbReference type="GO" id="GO:0005840">
    <property type="term" value="C:ribosome"/>
    <property type="evidence" value="ECO:0007669"/>
    <property type="project" value="UniProtKB-KW"/>
</dbReference>
<dbReference type="GO" id="GO:0003735">
    <property type="term" value="F:structural constituent of ribosome"/>
    <property type="evidence" value="ECO:0007669"/>
    <property type="project" value="InterPro"/>
</dbReference>
<dbReference type="GO" id="GO:0006412">
    <property type="term" value="P:translation"/>
    <property type="evidence" value="ECO:0007669"/>
    <property type="project" value="UniProtKB-UniRule"/>
</dbReference>
<dbReference type="Gene3D" id="4.10.830.30">
    <property type="entry name" value="Ribosomal protein L31"/>
    <property type="match status" value="1"/>
</dbReference>
<dbReference type="HAMAP" id="MF_00502">
    <property type="entry name" value="Ribosomal_bL31_2"/>
    <property type="match status" value="1"/>
</dbReference>
<dbReference type="InterPro" id="IPR034704">
    <property type="entry name" value="Ribosomal_bL28/bL31-like_sf"/>
</dbReference>
<dbReference type="InterPro" id="IPR002150">
    <property type="entry name" value="Ribosomal_bL31"/>
</dbReference>
<dbReference type="InterPro" id="IPR027493">
    <property type="entry name" value="Ribosomal_bL31_B"/>
</dbReference>
<dbReference type="InterPro" id="IPR042105">
    <property type="entry name" value="Ribosomal_bL31_sf"/>
</dbReference>
<dbReference type="NCBIfam" id="TIGR00105">
    <property type="entry name" value="L31"/>
    <property type="match status" value="1"/>
</dbReference>
<dbReference type="NCBIfam" id="NF002462">
    <property type="entry name" value="PRK01678.1"/>
    <property type="match status" value="1"/>
</dbReference>
<dbReference type="PANTHER" id="PTHR33280">
    <property type="entry name" value="50S RIBOSOMAL PROTEIN L31, CHLOROPLASTIC"/>
    <property type="match status" value="1"/>
</dbReference>
<dbReference type="PANTHER" id="PTHR33280:SF6">
    <property type="entry name" value="LARGE RIBOSOMAL SUBUNIT PROTEIN BL31A"/>
    <property type="match status" value="1"/>
</dbReference>
<dbReference type="Pfam" id="PF01197">
    <property type="entry name" value="Ribosomal_L31"/>
    <property type="match status" value="1"/>
</dbReference>
<dbReference type="PRINTS" id="PR01249">
    <property type="entry name" value="RIBOSOMALL31"/>
</dbReference>
<dbReference type="SUPFAM" id="SSF143800">
    <property type="entry name" value="L28p-like"/>
    <property type="match status" value="1"/>
</dbReference>
<dbReference type="PROSITE" id="PS01143">
    <property type="entry name" value="RIBOSOMAL_L31"/>
    <property type="match status" value="1"/>
</dbReference>
<feature type="chain" id="PRO_1000126846" description="Large ribosomal subunit protein bL31B">
    <location>
        <begin position="1"/>
        <end position="80"/>
    </location>
</feature>
<reference key="1">
    <citation type="journal article" date="2010" name="J. Bacteriol.">
        <title>Whole genome sequences of two Xylella fastidiosa strains (M12 and M23) causing almond leaf scorch disease in California.</title>
        <authorList>
            <person name="Chen J."/>
            <person name="Xie G."/>
            <person name="Han S."/>
            <person name="Chertkov O."/>
            <person name="Sims D."/>
            <person name="Civerolo E.L."/>
        </authorList>
    </citation>
    <scope>NUCLEOTIDE SEQUENCE [LARGE SCALE GENOMIC DNA]</scope>
    <source>
        <strain>M23</strain>
    </source>
</reference>
<protein>
    <recommendedName>
        <fullName evidence="1">Large ribosomal subunit protein bL31B</fullName>
    </recommendedName>
    <alternativeName>
        <fullName evidence="2">50S ribosomal protein L31 type B</fullName>
    </alternativeName>
</protein>
<sequence>MKPEIHPIYREVVFHDVTSNFKFLTRSTMGTKETTLWEDGLEYPLVKVEISSASHPFYTGKHKLVDTSGRIDKFKKRYAR</sequence>
<proteinExistence type="inferred from homology"/>
<keyword id="KW-0687">Ribonucleoprotein</keyword>
<keyword id="KW-0689">Ribosomal protein</keyword>
<organism>
    <name type="scientific">Xylella fastidiosa (strain M23)</name>
    <dbReference type="NCBI Taxonomy" id="405441"/>
    <lineage>
        <taxon>Bacteria</taxon>
        <taxon>Pseudomonadati</taxon>
        <taxon>Pseudomonadota</taxon>
        <taxon>Gammaproteobacteria</taxon>
        <taxon>Lysobacterales</taxon>
        <taxon>Lysobacteraceae</taxon>
        <taxon>Xylella</taxon>
    </lineage>
</organism>
<evidence type="ECO:0000255" key="1">
    <source>
        <dbReference type="HAMAP-Rule" id="MF_00502"/>
    </source>
</evidence>
<evidence type="ECO:0000305" key="2"/>
<gene>
    <name evidence="1" type="primary">rpmE2</name>
    <name type="ordered locus">XfasM23_0786</name>
</gene>
<accession>B2IAE5</accession>
<name>RL31B_XYLF2</name>